<protein>
    <recommendedName>
        <fullName evidence="3">Small ribosomal subunit protein uS8m</fullName>
    </recommendedName>
    <alternativeName>
        <fullName>37S ribosomal protein subunit S8, mitochondrial</fullName>
    </alternativeName>
</protein>
<feature type="chain" id="PRO_0000315961" description="Small ribosomal subunit protein uS8m">
    <location>
        <begin position="1"/>
        <end position="152"/>
    </location>
</feature>
<keyword id="KW-0496">Mitochondrion</keyword>
<keyword id="KW-1185">Reference proteome</keyword>
<keyword id="KW-0687">Ribonucleoprotein</keyword>
<keyword id="KW-0689">Ribosomal protein</keyword>
<sequence>MQLHYVFSHLQNSFRARKSLASVPNCNSVLELCAVLYHQGFLSSIQRGDIHGPDALPTITTRQNVATRRLWLGLKYFEGKPVLHYIRAVSKPSRKVNLTPSELLQFAKGRKVSFVNGLEPAEVGIVETKHGIMSIDDAIKNNLGGNVICRVK</sequence>
<gene>
    <name type="primary">mrps8</name>
    <name type="ORF">SPCC736.10c</name>
</gene>
<accession>O74956</accession>
<dbReference type="EMBL" id="CU329672">
    <property type="protein sequence ID" value="CAA19274.1"/>
    <property type="molecule type" value="Genomic_DNA"/>
</dbReference>
<dbReference type="PIR" id="T41567">
    <property type="entry name" value="T41567"/>
</dbReference>
<dbReference type="RefSeq" id="NP_587781.1">
    <property type="nucleotide sequence ID" value="NM_001022774.2"/>
</dbReference>
<dbReference type="SMR" id="O74956"/>
<dbReference type="ComplexPortal" id="CPX-10315">
    <property type="entry name" value="37S mitochondrial small ribosomal subunit"/>
</dbReference>
<dbReference type="FunCoup" id="O74956">
    <property type="interactions" value="198"/>
</dbReference>
<dbReference type="STRING" id="284812.O74956"/>
<dbReference type="PaxDb" id="4896-SPCC736.10c.1"/>
<dbReference type="EnsemblFungi" id="SPCC736.10c.1">
    <property type="protein sequence ID" value="SPCC736.10c.1:pep"/>
    <property type="gene ID" value="SPCC736.10c"/>
</dbReference>
<dbReference type="GeneID" id="2539594"/>
<dbReference type="KEGG" id="spo:2539594"/>
<dbReference type="PomBase" id="SPCC736.10c">
    <property type="gene designation" value="mrps8"/>
</dbReference>
<dbReference type="VEuPathDB" id="FungiDB:SPCC736.10c"/>
<dbReference type="eggNOG" id="ENOG502S6CR">
    <property type="taxonomic scope" value="Eukaryota"/>
</dbReference>
<dbReference type="HOGENOM" id="CLU_107213_0_0_1"/>
<dbReference type="InParanoid" id="O74956"/>
<dbReference type="OMA" id="KYWQNEP"/>
<dbReference type="PhylomeDB" id="O74956"/>
<dbReference type="PRO" id="PR:O74956"/>
<dbReference type="Proteomes" id="UP000002485">
    <property type="component" value="Chromosome III"/>
</dbReference>
<dbReference type="GO" id="GO:0005763">
    <property type="term" value="C:mitochondrial small ribosomal subunit"/>
    <property type="evidence" value="ECO:0000250"/>
    <property type="project" value="PomBase"/>
</dbReference>
<dbReference type="GO" id="GO:0005739">
    <property type="term" value="C:mitochondrion"/>
    <property type="evidence" value="ECO:0007005"/>
    <property type="project" value="PomBase"/>
</dbReference>
<dbReference type="GO" id="GO:0003735">
    <property type="term" value="F:structural constituent of ribosome"/>
    <property type="evidence" value="ECO:0000318"/>
    <property type="project" value="GO_Central"/>
</dbReference>
<dbReference type="GO" id="GO:0032543">
    <property type="term" value="P:mitochondrial translation"/>
    <property type="evidence" value="ECO:0000250"/>
    <property type="project" value="PomBase"/>
</dbReference>
<dbReference type="FunFam" id="3.30.1370.30:FF:000006">
    <property type="entry name" value="40S ribosomal protein S8"/>
    <property type="match status" value="1"/>
</dbReference>
<dbReference type="FunFam" id="3.30.1490.10:FF:000005">
    <property type="entry name" value="Mitochondrial 40S ribosomal protein S8"/>
    <property type="match status" value="1"/>
</dbReference>
<dbReference type="Gene3D" id="3.30.1370.30">
    <property type="match status" value="1"/>
</dbReference>
<dbReference type="Gene3D" id="3.30.1490.10">
    <property type="match status" value="1"/>
</dbReference>
<dbReference type="InterPro" id="IPR000630">
    <property type="entry name" value="Ribosomal_uS8"/>
</dbReference>
<dbReference type="InterPro" id="IPR035987">
    <property type="entry name" value="Ribosomal_uS8_sf"/>
</dbReference>
<dbReference type="Pfam" id="PF00410">
    <property type="entry name" value="Ribosomal_S8"/>
    <property type="match status" value="1"/>
</dbReference>
<dbReference type="SUPFAM" id="SSF56047">
    <property type="entry name" value="Ribosomal protein S8"/>
    <property type="match status" value="1"/>
</dbReference>
<reference key="1">
    <citation type="journal article" date="2002" name="Nature">
        <title>The genome sequence of Schizosaccharomyces pombe.</title>
        <authorList>
            <person name="Wood V."/>
            <person name="Gwilliam R."/>
            <person name="Rajandream M.A."/>
            <person name="Lyne M.H."/>
            <person name="Lyne R."/>
            <person name="Stewart A."/>
            <person name="Sgouros J.G."/>
            <person name="Peat N."/>
            <person name="Hayles J."/>
            <person name="Baker S.G."/>
            <person name="Basham D."/>
            <person name="Bowman S."/>
            <person name="Brooks K."/>
            <person name="Brown D."/>
            <person name="Brown S."/>
            <person name="Chillingworth T."/>
            <person name="Churcher C.M."/>
            <person name="Collins M."/>
            <person name="Connor R."/>
            <person name="Cronin A."/>
            <person name="Davis P."/>
            <person name="Feltwell T."/>
            <person name="Fraser A."/>
            <person name="Gentles S."/>
            <person name="Goble A."/>
            <person name="Hamlin N."/>
            <person name="Harris D.E."/>
            <person name="Hidalgo J."/>
            <person name="Hodgson G."/>
            <person name="Holroyd S."/>
            <person name="Hornsby T."/>
            <person name="Howarth S."/>
            <person name="Huckle E.J."/>
            <person name="Hunt S."/>
            <person name="Jagels K."/>
            <person name="James K.D."/>
            <person name="Jones L."/>
            <person name="Jones M."/>
            <person name="Leather S."/>
            <person name="McDonald S."/>
            <person name="McLean J."/>
            <person name="Mooney P."/>
            <person name="Moule S."/>
            <person name="Mungall K.L."/>
            <person name="Murphy L.D."/>
            <person name="Niblett D."/>
            <person name="Odell C."/>
            <person name="Oliver K."/>
            <person name="O'Neil S."/>
            <person name="Pearson D."/>
            <person name="Quail M.A."/>
            <person name="Rabbinowitsch E."/>
            <person name="Rutherford K.M."/>
            <person name="Rutter S."/>
            <person name="Saunders D."/>
            <person name="Seeger K."/>
            <person name="Sharp S."/>
            <person name="Skelton J."/>
            <person name="Simmonds M.N."/>
            <person name="Squares R."/>
            <person name="Squares S."/>
            <person name="Stevens K."/>
            <person name="Taylor K."/>
            <person name="Taylor R.G."/>
            <person name="Tivey A."/>
            <person name="Walsh S.V."/>
            <person name="Warren T."/>
            <person name="Whitehead S."/>
            <person name="Woodward J.R."/>
            <person name="Volckaert G."/>
            <person name="Aert R."/>
            <person name="Robben J."/>
            <person name="Grymonprez B."/>
            <person name="Weltjens I."/>
            <person name="Vanstreels E."/>
            <person name="Rieger M."/>
            <person name="Schaefer M."/>
            <person name="Mueller-Auer S."/>
            <person name="Gabel C."/>
            <person name="Fuchs M."/>
            <person name="Duesterhoeft A."/>
            <person name="Fritzc C."/>
            <person name="Holzer E."/>
            <person name="Moestl D."/>
            <person name="Hilbert H."/>
            <person name="Borzym K."/>
            <person name="Langer I."/>
            <person name="Beck A."/>
            <person name="Lehrach H."/>
            <person name="Reinhardt R."/>
            <person name="Pohl T.M."/>
            <person name="Eger P."/>
            <person name="Zimmermann W."/>
            <person name="Wedler H."/>
            <person name="Wambutt R."/>
            <person name="Purnelle B."/>
            <person name="Goffeau A."/>
            <person name="Cadieu E."/>
            <person name="Dreano S."/>
            <person name="Gloux S."/>
            <person name="Lelaure V."/>
            <person name="Mottier S."/>
            <person name="Galibert F."/>
            <person name="Aves S.J."/>
            <person name="Xiang Z."/>
            <person name="Hunt C."/>
            <person name="Moore K."/>
            <person name="Hurst S.M."/>
            <person name="Lucas M."/>
            <person name="Rochet M."/>
            <person name="Gaillardin C."/>
            <person name="Tallada V.A."/>
            <person name="Garzon A."/>
            <person name="Thode G."/>
            <person name="Daga R.R."/>
            <person name="Cruzado L."/>
            <person name="Jimenez J."/>
            <person name="Sanchez M."/>
            <person name="del Rey F."/>
            <person name="Benito J."/>
            <person name="Dominguez A."/>
            <person name="Revuelta J.L."/>
            <person name="Moreno S."/>
            <person name="Armstrong J."/>
            <person name="Forsburg S.L."/>
            <person name="Cerutti L."/>
            <person name="Lowe T."/>
            <person name="McCombie W.R."/>
            <person name="Paulsen I."/>
            <person name="Potashkin J."/>
            <person name="Shpakovski G.V."/>
            <person name="Ussery D."/>
            <person name="Barrell B.G."/>
            <person name="Nurse P."/>
        </authorList>
    </citation>
    <scope>NUCLEOTIDE SEQUENCE [LARGE SCALE GENOMIC DNA]</scope>
    <source>
        <strain>972 / ATCC 24843</strain>
    </source>
</reference>
<reference key="2">
    <citation type="journal article" date="2006" name="Nat. Biotechnol.">
        <title>ORFeome cloning and global analysis of protein localization in the fission yeast Schizosaccharomyces pombe.</title>
        <authorList>
            <person name="Matsuyama A."/>
            <person name="Arai R."/>
            <person name="Yashiroda Y."/>
            <person name="Shirai A."/>
            <person name="Kamata A."/>
            <person name="Sekido S."/>
            <person name="Kobayashi Y."/>
            <person name="Hashimoto A."/>
            <person name="Hamamoto M."/>
            <person name="Hiraoka Y."/>
            <person name="Horinouchi S."/>
            <person name="Yoshida M."/>
        </authorList>
    </citation>
    <scope>SUBCELLULAR LOCATION [LARGE SCALE ANALYSIS]</scope>
</reference>
<name>RT08_SCHPO</name>
<proteinExistence type="inferred from homology"/>
<evidence type="ECO:0000250" key="1">
    <source>
        <dbReference type="UniProtKB" id="Q03799"/>
    </source>
</evidence>
<evidence type="ECO:0000269" key="2">
    <source>
    </source>
</evidence>
<evidence type="ECO:0000305" key="3"/>
<comment type="function">
    <text evidence="1">Component of the mitochondrial ribosome (mitoribosome), a dedicated translation machinery responsible for the synthesis of mitochondrial genome-encoded proteins, including at least some of the essential transmembrane subunits of the mitochondrial respiratory chain. The mitoribosomes are attached to the mitochondrial inner membrane and translation products are cotranslationally integrated into the membrane.</text>
</comment>
<comment type="subunit">
    <text evidence="1">Component of the mitochondrial small ribosomal subunit (mt-SSU). Mature yeast 74S mitochondrial ribosomes consist of a small (37S) and a large (54S) subunit. The 37S small subunit contains a 15S ribosomal RNA (15S mt-rRNA) and at least 32 different proteins. The 54S large subunit contains a 21S rRNA (21S mt-rRNA) and at least 45 different proteins.</text>
</comment>
<comment type="subcellular location">
    <subcellularLocation>
        <location evidence="2">Mitochondrion</location>
    </subcellularLocation>
</comment>
<comment type="similarity">
    <text evidence="3">Belongs to the universal ribosomal protein uS8 family.</text>
</comment>
<organism>
    <name type="scientific">Schizosaccharomyces pombe (strain 972 / ATCC 24843)</name>
    <name type="common">Fission yeast</name>
    <dbReference type="NCBI Taxonomy" id="284812"/>
    <lineage>
        <taxon>Eukaryota</taxon>
        <taxon>Fungi</taxon>
        <taxon>Dikarya</taxon>
        <taxon>Ascomycota</taxon>
        <taxon>Taphrinomycotina</taxon>
        <taxon>Schizosaccharomycetes</taxon>
        <taxon>Schizosaccharomycetales</taxon>
        <taxon>Schizosaccharomycetaceae</taxon>
        <taxon>Schizosaccharomyces</taxon>
    </lineage>
</organism>